<name>YTCA_BACSU</name>
<evidence type="ECO:0000250" key="1"/>
<evidence type="ECO:0000250" key="2">
    <source>
        <dbReference type="UniProtKB" id="Q0P8H3"/>
    </source>
</evidence>
<evidence type="ECO:0000255" key="3"/>
<evidence type="ECO:0000305" key="4"/>
<organism>
    <name type="scientific">Bacillus subtilis (strain 168)</name>
    <dbReference type="NCBI Taxonomy" id="224308"/>
    <lineage>
        <taxon>Bacteria</taxon>
        <taxon>Bacillati</taxon>
        <taxon>Bacillota</taxon>
        <taxon>Bacilli</taxon>
        <taxon>Bacillales</taxon>
        <taxon>Bacillaceae</taxon>
        <taxon>Bacillus</taxon>
    </lineage>
</organism>
<accession>O34862</accession>
<accession>Q795N5</accession>
<proteinExistence type="inferred from homology"/>
<protein>
    <recommendedName>
        <fullName>Putative UDP-glucose 6-dehydrogenase YtcA</fullName>
        <shortName>UDP-Glc dehydrogenase</shortName>
        <shortName>UDP-GlcDH</shortName>
        <shortName>UDPGDH</shortName>
        <ecNumber>1.1.1.22</ecNumber>
    </recommendedName>
</protein>
<comment type="function">
    <text evidence="1">Catalyzes the conversion of UDP-glucose into UDP-glucuronate, one of the precursors of teichuronic acid.</text>
</comment>
<comment type="catalytic activity">
    <reaction>
        <text>UDP-alpha-D-glucose + 2 NAD(+) + H2O = UDP-alpha-D-glucuronate + 2 NADH + 3 H(+)</text>
        <dbReference type="Rhea" id="RHEA:23596"/>
        <dbReference type="ChEBI" id="CHEBI:15377"/>
        <dbReference type="ChEBI" id="CHEBI:15378"/>
        <dbReference type="ChEBI" id="CHEBI:57540"/>
        <dbReference type="ChEBI" id="CHEBI:57945"/>
        <dbReference type="ChEBI" id="CHEBI:58052"/>
        <dbReference type="ChEBI" id="CHEBI:58885"/>
        <dbReference type="EC" id="1.1.1.22"/>
    </reaction>
</comment>
<comment type="pathway">
    <text>Nucleotide-sugar biosynthesis; UDP-alpha-D-glucuronate biosynthesis; UDP-alpha-D-glucuronate from UDP-alpha-D-glucose: step 1/1.</text>
</comment>
<comment type="similarity">
    <text evidence="4">Belongs to the UDP-glucose/GDP-mannose dehydrogenase family.</text>
</comment>
<keyword id="KW-0961">Cell wall biogenesis/degradation</keyword>
<keyword id="KW-0520">NAD</keyword>
<keyword id="KW-0560">Oxidoreductase</keyword>
<keyword id="KW-1185">Reference proteome</keyword>
<keyword id="KW-0732">Signal</keyword>
<dbReference type="EC" id="1.1.1.22"/>
<dbReference type="EMBL" id="AF008220">
    <property type="protein sequence ID" value="AAC00367.1"/>
    <property type="molecule type" value="Genomic_DNA"/>
</dbReference>
<dbReference type="EMBL" id="AL009126">
    <property type="protein sequence ID" value="CAB15064.1"/>
    <property type="molecule type" value="Genomic_DNA"/>
</dbReference>
<dbReference type="PIR" id="G69988">
    <property type="entry name" value="G69988"/>
</dbReference>
<dbReference type="RefSeq" id="NP_390964.1">
    <property type="nucleotide sequence ID" value="NC_000964.3"/>
</dbReference>
<dbReference type="RefSeq" id="WP_004398478.1">
    <property type="nucleotide sequence ID" value="NZ_OZ025638.1"/>
</dbReference>
<dbReference type="SMR" id="O34862"/>
<dbReference type="FunCoup" id="O34862">
    <property type="interactions" value="498"/>
</dbReference>
<dbReference type="STRING" id="224308.BSU30860"/>
<dbReference type="PaxDb" id="224308-BSU30860"/>
<dbReference type="EnsemblBacteria" id="CAB15064">
    <property type="protein sequence ID" value="CAB15064"/>
    <property type="gene ID" value="BSU_30860"/>
</dbReference>
<dbReference type="GeneID" id="936155"/>
<dbReference type="KEGG" id="bsu:BSU30860"/>
<dbReference type="PATRIC" id="fig|224308.179.peg.3345"/>
<dbReference type="eggNOG" id="COG1004">
    <property type="taxonomic scope" value="Bacteria"/>
</dbReference>
<dbReference type="InParanoid" id="O34862"/>
<dbReference type="OrthoDB" id="9803238at2"/>
<dbReference type="PhylomeDB" id="O34862"/>
<dbReference type="BioCyc" id="BSUB:BSU30860-MONOMER"/>
<dbReference type="UniPathway" id="UPA00038">
    <property type="reaction ID" value="UER00491"/>
</dbReference>
<dbReference type="Proteomes" id="UP000001570">
    <property type="component" value="Chromosome"/>
</dbReference>
<dbReference type="GO" id="GO:0051287">
    <property type="term" value="F:NAD binding"/>
    <property type="evidence" value="ECO:0000250"/>
    <property type="project" value="UniProtKB"/>
</dbReference>
<dbReference type="GO" id="GO:0003979">
    <property type="term" value="F:UDP-glucose 6-dehydrogenase activity"/>
    <property type="evidence" value="ECO:0000250"/>
    <property type="project" value="UniProtKB"/>
</dbReference>
<dbReference type="GO" id="GO:0071555">
    <property type="term" value="P:cell wall organization"/>
    <property type="evidence" value="ECO:0007669"/>
    <property type="project" value="UniProtKB-KW"/>
</dbReference>
<dbReference type="GO" id="GO:0000271">
    <property type="term" value="P:polysaccharide biosynthetic process"/>
    <property type="evidence" value="ECO:0007669"/>
    <property type="project" value="InterPro"/>
</dbReference>
<dbReference type="GO" id="GO:0006065">
    <property type="term" value="P:UDP-glucuronate biosynthetic process"/>
    <property type="evidence" value="ECO:0007669"/>
    <property type="project" value="UniProtKB-UniPathway"/>
</dbReference>
<dbReference type="Gene3D" id="1.20.5.100">
    <property type="entry name" value="Cytochrome c1, transmembrane anchor, C-terminal"/>
    <property type="match status" value="1"/>
</dbReference>
<dbReference type="Gene3D" id="3.40.50.720">
    <property type="entry name" value="NAD(P)-binding Rossmann-like Domain"/>
    <property type="match status" value="2"/>
</dbReference>
<dbReference type="InterPro" id="IPR008927">
    <property type="entry name" value="6-PGluconate_DH-like_C_sf"/>
</dbReference>
<dbReference type="InterPro" id="IPR036291">
    <property type="entry name" value="NAD(P)-bd_dom_sf"/>
</dbReference>
<dbReference type="InterPro" id="IPR017476">
    <property type="entry name" value="UDP-Glc/GDP-Man"/>
</dbReference>
<dbReference type="InterPro" id="IPR014027">
    <property type="entry name" value="UDP-Glc/GDP-Man_DH_C"/>
</dbReference>
<dbReference type="InterPro" id="IPR036220">
    <property type="entry name" value="UDP-Glc/GDP-Man_DH_C_sf"/>
</dbReference>
<dbReference type="InterPro" id="IPR014026">
    <property type="entry name" value="UDP-Glc/GDP-Man_DH_dimer"/>
</dbReference>
<dbReference type="InterPro" id="IPR001732">
    <property type="entry name" value="UDP-Glc/GDP-Man_DH_N"/>
</dbReference>
<dbReference type="InterPro" id="IPR028357">
    <property type="entry name" value="UDPglc_DH_bac"/>
</dbReference>
<dbReference type="NCBIfam" id="TIGR03026">
    <property type="entry name" value="NDP-sugDHase"/>
    <property type="match status" value="1"/>
</dbReference>
<dbReference type="PANTHER" id="PTHR43750">
    <property type="entry name" value="UDP-GLUCOSE 6-DEHYDROGENASE TUAD"/>
    <property type="match status" value="1"/>
</dbReference>
<dbReference type="PANTHER" id="PTHR43750:SF3">
    <property type="entry name" value="UDP-GLUCOSE 6-DEHYDROGENASE TUAD"/>
    <property type="match status" value="1"/>
</dbReference>
<dbReference type="Pfam" id="PF00984">
    <property type="entry name" value="UDPG_MGDP_dh"/>
    <property type="match status" value="1"/>
</dbReference>
<dbReference type="Pfam" id="PF03720">
    <property type="entry name" value="UDPG_MGDP_dh_C"/>
    <property type="match status" value="1"/>
</dbReference>
<dbReference type="Pfam" id="PF03721">
    <property type="entry name" value="UDPG_MGDP_dh_N"/>
    <property type="match status" value="1"/>
</dbReference>
<dbReference type="PIRSF" id="PIRSF500134">
    <property type="entry name" value="UDPglc_DH_bac"/>
    <property type="match status" value="1"/>
</dbReference>
<dbReference type="PIRSF" id="PIRSF000124">
    <property type="entry name" value="UDPglc_GDPman_dh"/>
    <property type="match status" value="1"/>
</dbReference>
<dbReference type="SMART" id="SM00984">
    <property type="entry name" value="UDPG_MGDP_dh_C"/>
    <property type="match status" value="1"/>
</dbReference>
<dbReference type="SUPFAM" id="SSF48179">
    <property type="entry name" value="6-phosphogluconate dehydrogenase C-terminal domain-like"/>
    <property type="match status" value="1"/>
</dbReference>
<dbReference type="SUPFAM" id="SSF51735">
    <property type="entry name" value="NAD(P)-binding Rossmann-fold domains"/>
    <property type="match status" value="1"/>
</dbReference>
<dbReference type="SUPFAM" id="SSF52413">
    <property type="entry name" value="UDP-glucose/GDP-mannose dehydrogenase C-terminal domain"/>
    <property type="match status" value="1"/>
</dbReference>
<sequence length="428" mass="46833">MKICVVGAGYVGLTLSAALASIGHDMICTDKDVKKIGQLKKGVIPFYEPGLSDAILRCGNLSFSSEVKSSMEECPVIFIAVGTPPRSDGSADTKALQSVIGDLSEAIRSYKTIITKSTVPPGTNENIAKQLIASGVSKNLFNIVSNPEFLREGNALYDMLHPDKTVIGVQEEDHVSAAIVKSIYKHIDTPFIVTSLAGAELIKYANNFFLAAKISFINEMARICEAYQSDISDISRAIGLDPRIGKHFLQAGIGYGGSCFPKDLQALQFAAQEKNTETFLLRAVQHINDTQLGLYIKKIQSFFETLQGKKAAVLGISFKPNTDDIRNSQAVRLMERLAELGCDVHAYDPEAVLPEHLRQHVTQHSQAFDAIEESDFLFLATEWSEFLAFDWKKAADIMKGRLVIDGRNVLKKELIEACGLICTGVGRP</sequence>
<reference key="1">
    <citation type="journal article" date="1997" name="Microbiology">
        <title>Sequencing and functional annotation of the Bacillus subtilis genes in the 200 kb rrnB-dnaB region.</title>
        <authorList>
            <person name="Lapidus A."/>
            <person name="Galleron N."/>
            <person name="Sorokin A."/>
            <person name="Ehrlich S.D."/>
        </authorList>
    </citation>
    <scope>NUCLEOTIDE SEQUENCE [GENOMIC DNA]</scope>
    <source>
        <strain>168</strain>
    </source>
</reference>
<reference key="2">
    <citation type="journal article" date="1997" name="Nature">
        <title>The complete genome sequence of the Gram-positive bacterium Bacillus subtilis.</title>
        <authorList>
            <person name="Kunst F."/>
            <person name="Ogasawara N."/>
            <person name="Moszer I."/>
            <person name="Albertini A.M."/>
            <person name="Alloni G."/>
            <person name="Azevedo V."/>
            <person name="Bertero M.G."/>
            <person name="Bessieres P."/>
            <person name="Bolotin A."/>
            <person name="Borchert S."/>
            <person name="Borriss R."/>
            <person name="Boursier L."/>
            <person name="Brans A."/>
            <person name="Braun M."/>
            <person name="Brignell S.C."/>
            <person name="Bron S."/>
            <person name="Brouillet S."/>
            <person name="Bruschi C.V."/>
            <person name="Caldwell B."/>
            <person name="Capuano V."/>
            <person name="Carter N.M."/>
            <person name="Choi S.-K."/>
            <person name="Codani J.-J."/>
            <person name="Connerton I.F."/>
            <person name="Cummings N.J."/>
            <person name="Daniel R.A."/>
            <person name="Denizot F."/>
            <person name="Devine K.M."/>
            <person name="Duesterhoeft A."/>
            <person name="Ehrlich S.D."/>
            <person name="Emmerson P.T."/>
            <person name="Entian K.-D."/>
            <person name="Errington J."/>
            <person name="Fabret C."/>
            <person name="Ferrari E."/>
            <person name="Foulger D."/>
            <person name="Fritz C."/>
            <person name="Fujita M."/>
            <person name="Fujita Y."/>
            <person name="Fuma S."/>
            <person name="Galizzi A."/>
            <person name="Galleron N."/>
            <person name="Ghim S.-Y."/>
            <person name="Glaser P."/>
            <person name="Goffeau A."/>
            <person name="Golightly E.J."/>
            <person name="Grandi G."/>
            <person name="Guiseppi G."/>
            <person name="Guy B.J."/>
            <person name="Haga K."/>
            <person name="Haiech J."/>
            <person name="Harwood C.R."/>
            <person name="Henaut A."/>
            <person name="Hilbert H."/>
            <person name="Holsappel S."/>
            <person name="Hosono S."/>
            <person name="Hullo M.-F."/>
            <person name="Itaya M."/>
            <person name="Jones L.-M."/>
            <person name="Joris B."/>
            <person name="Karamata D."/>
            <person name="Kasahara Y."/>
            <person name="Klaerr-Blanchard M."/>
            <person name="Klein C."/>
            <person name="Kobayashi Y."/>
            <person name="Koetter P."/>
            <person name="Koningstein G."/>
            <person name="Krogh S."/>
            <person name="Kumano M."/>
            <person name="Kurita K."/>
            <person name="Lapidus A."/>
            <person name="Lardinois S."/>
            <person name="Lauber J."/>
            <person name="Lazarevic V."/>
            <person name="Lee S.-M."/>
            <person name="Levine A."/>
            <person name="Liu H."/>
            <person name="Masuda S."/>
            <person name="Mauel C."/>
            <person name="Medigue C."/>
            <person name="Medina N."/>
            <person name="Mellado R.P."/>
            <person name="Mizuno M."/>
            <person name="Moestl D."/>
            <person name="Nakai S."/>
            <person name="Noback M."/>
            <person name="Noone D."/>
            <person name="O'Reilly M."/>
            <person name="Ogawa K."/>
            <person name="Ogiwara A."/>
            <person name="Oudega B."/>
            <person name="Park S.-H."/>
            <person name="Parro V."/>
            <person name="Pohl T.M."/>
            <person name="Portetelle D."/>
            <person name="Porwollik S."/>
            <person name="Prescott A.M."/>
            <person name="Presecan E."/>
            <person name="Pujic P."/>
            <person name="Purnelle B."/>
            <person name="Rapoport G."/>
            <person name="Rey M."/>
            <person name="Reynolds S."/>
            <person name="Rieger M."/>
            <person name="Rivolta C."/>
            <person name="Rocha E."/>
            <person name="Roche B."/>
            <person name="Rose M."/>
            <person name="Sadaie Y."/>
            <person name="Sato T."/>
            <person name="Scanlan E."/>
            <person name="Schleich S."/>
            <person name="Schroeter R."/>
            <person name="Scoffone F."/>
            <person name="Sekiguchi J."/>
            <person name="Sekowska A."/>
            <person name="Seror S.J."/>
            <person name="Serror P."/>
            <person name="Shin B.-S."/>
            <person name="Soldo B."/>
            <person name="Sorokin A."/>
            <person name="Tacconi E."/>
            <person name="Takagi T."/>
            <person name="Takahashi H."/>
            <person name="Takemaru K."/>
            <person name="Takeuchi M."/>
            <person name="Tamakoshi A."/>
            <person name="Tanaka T."/>
            <person name="Terpstra P."/>
            <person name="Tognoni A."/>
            <person name="Tosato V."/>
            <person name="Uchiyama S."/>
            <person name="Vandenbol M."/>
            <person name="Vannier F."/>
            <person name="Vassarotti A."/>
            <person name="Viari A."/>
            <person name="Wambutt R."/>
            <person name="Wedler E."/>
            <person name="Wedler H."/>
            <person name="Weitzenegger T."/>
            <person name="Winters P."/>
            <person name="Wipat A."/>
            <person name="Yamamoto H."/>
            <person name="Yamane K."/>
            <person name="Yasumoto K."/>
            <person name="Yata K."/>
            <person name="Yoshida K."/>
            <person name="Yoshikawa H.-F."/>
            <person name="Zumstein E."/>
            <person name="Yoshikawa H."/>
            <person name="Danchin A."/>
        </authorList>
    </citation>
    <scope>NUCLEOTIDE SEQUENCE [LARGE SCALE GENOMIC DNA]</scope>
    <source>
        <strain>168</strain>
    </source>
</reference>
<feature type="signal peptide" evidence="3">
    <location>
        <begin position="1"/>
        <end position="23"/>
    </location>
</feature>
<feature type="chain" id="PRO_0000379980" description="Putative UDP-glucose 6-dehydrogenase YtcA">
    <location>
        <begin position="24"/>
        <end position="428"/>
    </location>
</feature>
<feature type="active site" description="Nucleophile" evidence="2">
    <location>
        <position position="259"/>
    </location>
</feature>
<feature type="binding site" evidence="3">
    <location>
        <begin position="2"/>
        <end position="19"/>
    </location>
    <ligand>
        <name>NAD(+)</name>
        <dbReference type="ChEBI" id="CHEBI:57540"/>
    </ligand>
</feature>
<feature type="binding site" evidence="2">
    <location>
        <position position="11"/>
    </location>
    <ligand>
        <name>NAD(+)</name>
        <dbReference type="ChEBI" id="CHEBI:57540"/>
    </ligand>
</feature>
<feature type="binding site" evidence="2">
    <location>
        <position position="30"/>
    </location>
    <ligand>
        <name>NAD(+)</name>
        <dbReference type="ChEBI" id="CHEBI:57540"/>
    </ligand>
</feature>
<feature type="binding site" evidence="2">
    <location>
        <position position="35"/>
    </location>
    <ligand>
        <name>NAD(+)</name>
        <dbReference type="ChEBI" id="CHEBI:57540"/>
    </ligand>
</feature>
<feature type="binding site" evidence="2">
    <location>
        <position position="118"/>
    </location>
    <ligand>
        <name>NAD(+)</name>
        <dbReference type="ChEBI" id="CHEBI:57540"/>
    </ligand>
</feature>
<feature type="binding site" evidence="2">
    <location>
        <begin position="148"/>
        <end position="152"/>
    </location>
    <ligand>
        <name>substrate</name>
    </ligand>
</feature>
<feature type="binding site" evidence="2">
    <location>
        <position position="152"/>
    </location>
    <ligand>
        <name>NAD(+)</name>
        <dbReference type="ChEBI" id="CHEBI:57540"/>
    </ligand>
</feature>
<feature type="binding site" evidence="2">
    <location>
        <position position="203"/>
    </location>
    <ligand>
        <name>substrate</name>
    </ligand>
</feature>
<feature type="binding site" evidence="2">
    <location>
        <position position="207"/>
    </location>
    <ligand>
        <name>substrate</name>
    </ligand>
</feature>
<feature type="binding site" evidence="2">
    <location>
        <begin position="248"/>
        <end position="252"/>
    </location>
    <ligand>
        <name>substrate</name>
    </ligand>
</feature>
<feature type="binding site" evidence="2">
    <location>
        <position position="256"/>
    </location>
    <ligand>
        <name>substrate</name>
    </ligand>
</feature>
<feature type="binding site" evidence="2">
    <location>
        <position position="262"/>
    </location>
    <ligand>
        <name>NAD(+)</name>
        <dbReference type="ChEBI" id="CHEBI:57540"/>
    </ligand>
</feature>
<feature type="binding site" evidence="2">
    <location>
        <position position="319"/>
    </location>
    <ligand>
        <name>substrate</name>
    </ligand>
</feature>
<feature type="binding site" evidence="2">
    <location>
        <position position="326"/>
    </location>
    <ligand>
        <name>NAD(+)</name>
        <dbReference type="ChEBI" id="CHEBI:57540"/>
    </ligand>
</feature>
<gene>
    <name type="primary">ytcA</name>
    <name type="ordered locus">BSU30860</name>
</gene>